<evidence type="ECO:0000250" key="1"/>
<evidence type="ECO:0000255" key="2">
    <source>
        <dbReference type="PROSITE-ProRule" id="PRU00044"/>
    </source>
</evidence>
<evidence type="ECO:0000255" key="3">
    <source>
        <dbReference type="PROSITE-ProRule" id="PRU00576"/>
    </source>
</evidence>
<evidence type="ECO:0000256" key="4">
    <source>
        <dbReference type="SAM" id="MobiDB-lite"/>
    </source>
</evidence>
<evidence type="ECO:0000305" key="5"/>
<name>MARE2_CHICK</name>
<gene>
    <name type="primary">MAPRE2</name>
    <name type="ORF">RCJMB04_10e21</name>
</gene>
<proteinExistence type="evidence at transcript level"/>
<feature type="chain" id="PRO_0000213427" description="Microtubule-associated protein RP/EB family member 2">
    <location>
        <begin position="1"/>
        <end position="338"/>
    </location>
</feature>
<feature type="domain" description="Calponin-homology (CH)" evidence="2">
    <location>
        <begin position="57"/>
        <end position="159"/>
    </location>
</feature>
<feature type="domain" description="EB1 C-terminal" evidence="3">
    <location>
        <begin position="236"/>
        <end position="306"/>
    </location>
</feature>
<feature type="region of interest" description="Disordered" evidence="4">
    <location>
        <begin position="1"/>
        <end position="21"/>
    </location>
</feature>
<feature type="region of interest" description="Disordered" evidence="4">
    <location>
        <begin position="171"/>
        <end position="241"/>
    </location>
</feature>
<feature type="region of interest" description="Disordered" evidence="4">
    <location>
        <begin position="300"/>
        <end position="338"/>
    </location>
</feature>
<feature type="compositionally biased region" description="Low complexity" evidence="4">
    <location>
        <begin position="200"/>
        <end position="234"/>
    </location>
</feature>
<feature type="compositionally biased region" description="Basic and acidic residues" evidence="4">
    <location>
        <begin position="300"/>
        <end position="327"/>
    </location>
</feature>
<feature type="compositionally biased region" description="Low complexity" evidence="4">
    <location>
        <begin position="328"/>
        <end position="338"/>
    </location>
</feature>
<sequence>MPGPTQALSPNGENNNDIIQDNGTTIIPFRKHTVRGERSYSWGMAVNVYSTSITQETMSRHDIIAWVNDILALNYTKVEQLCSGAAYCQFMDMLFPGCISLKKVKFQAKLEHEYIHNFKLLQASFKRMNVDKVIPVEKLVKGRFQDNLDFIQWFKKFFDANYDGKEYDPVEARQGQDALPPPDPGEQIFNLPKKSHHANSPTAGAAKSSPASKPGSTPSRPSSAKKAAPSSSASKSDKDLETQVIQLSEQVHSLKLALEGVEKERDFYFGKLREIELLCQEHGGENNDLVHRLMEVLYASEEHESHTEEHEGEEQVHEQPSSRRSTDSRSVSDNFHFV</sequence>
<keyword id="KW-0131">Cell cycle</keyword>
<keyword id="KW-0132">Cell division</keyword>
<keyword id="KW-0963">Cytoplasm</keyword>
<keyword id="KW-0206">Cytoskeleton</keyword>
<keyword id="KW-0493">Microtubule</keyword>
<keyword id="KW-0498">Mitosis</keyword>
<keyword id="KW-1185">Reference proteome</keyword>
<accession>Q5ZKK1</accession>
<protein>
    <recommendedName>
        <fullName>Microtubule-associated protein RP/EB family member 2</fullName>
    </recommendedName>
</protein>
<dbReference type="EMBL" id="AJ720083">
    <property type="protein sequence ID" value="CAG31742.1"/>
    <property type="molecule type" value="mRNA"/>
</dbReference>
<dbReference type="RefSeq" id="NP_001026188.1">
    <property type="nucleotide sequence ID" value="NM_001031017.1"/>
</dbReference>
<dbReference type="SMR" id="Q5ZKK1"/>
<dbReference type="FunCoup" id="Q5ZKK1">
    <property type="interactions" value="2596"/>
</dbReference>
<dbReference type="STRING" id="9031.ENSGALP00000049462"/>
<dbReference type="GlyGen" id="Q5ZKK1">
    <property type="glycosylation" value="2 sites"/>
</dbReference>
<dbReference type="PaxDb" id="9031-ENSGALP00000035995"/>
<dbReference type="KEGG" id="gga:421105"/>
<dbReference type="VEuPathDB" id="HostDB:geneid_421105"/>
<dbReference type="eggNOG" id="KOG3000">
    <property type="taxonomic scope" value="Eukaryota"/>
</dbReference>
<dbReference type="HOGENOM" id="CLU_041744_1_0_1"/>
<dbReference type="InParanoid" id="Q5ZKK1"/>
<dbReference type="OrthoDB" id="2119228at2759"/>
<dbReference type="PhylomeDB" id="Q5ZKK1"/>
<dbReference type="PRO" id="PR:Q5ZKK1"/>
<dbReference type="Proteomes" id="UP000000539">
    <property type="component" value="Unassembled WGS sequence"/>
</dbReference>
<dbReference type="GO" id="GO:0005881">
    <property type="term" value="C:cytoplasmic microtubule"/>
    <property type="evidence" value="ECO:0000318"/>
    <property type="project" value="GO_Central"/>
</dbReference>
<dbReference type="GO" id="GO:0005815">
    <property type="term" value="C:microtubule organizing center"/>
    <property type="evidence" value="ECO:0000318"/>
    <property type="project" value="GO_Central"/>
</dbReference>
<dbReference type="GO" id="GO:0035371">
    <property type="term" value="C:microtubule plus-end"/>
    <property type="evidence" value="ECO:0000318"/>
    <property type="project" value="GO_Central"/>
</dbReference>
<dbReference type="GO" id="GO:0051233">
    <property type="term" value="C:spindle midzone"/>
    <property type="evidence" value="ECO:0000318"/>
    <property type="project" value="GO_Central"/>
</dbReference>
<dbReference type="GO" id="GO:0051010">
    <property type="term" value="F:microtubule plus-end binding"/>
    <property type="evidence" value="ECO:0000318"/>
    <property type="project" value="GO_Central"/>
</dbReference>
<dbReference type="GO" id="GO:0051301">
    <property type="term" value="P:cell division"/>
    <property type="evidence" value="ECO:0007669"/>
    <property type="project" value="UniProtKB-KW"/>
</dbReference>
<dbReference type="GO" id="GO:0035372">
    <property type="term" value="P:protein localization to microtubule"/>
    <property type="evidence" value="ECO:0000318"/>
    <property type="project" value="GO_Central"/>
</dbReference>
<dbReference type="GO" id="GO:0031110">
    <property type="term" value="P:regulation of microtubule polymerization or depolymerization"/>
    <property type="evidence" value="ECO:0000318"/>
    <property type="project" value="GO_Central"/>
</dbReference>
<dbReference type="GO" id="GO:0051225">
    <property type="term" value="P:spindle assembly"/>
    <property type="evidence" value="ECO:0000318"/>
    <property type="project" value="GO_Central"/>
</dbReference>
<dbReference type="FunFam" id="1.20.5.1430:FF:000002">
    <property type="entry name" value="microtubule-associated protein RP/EB family member 2 isoform X1"/>
    <property type="match status" value="1"/>
</dbReference>
<dbReference type="FunFam" id="1.10.418.10:FF:000007">
    <property type="entry name" value="Microtubule-associated protein, RP/EB family, member 2"/>
    <property type="match status" value="1"/>
</dbReference>
<dbReference type="Gene3D" id="1.20.5.1430">
    <property type="match status" value="1"/>
</dbReference>
<dbReference type="Gene3D" id="1.10.418.10">
    <property type="entry name" value="Calponin-like domain"/>
    <property type="match status" value="1"/>
</dbReference>
<dbReference type="InterPro" id="IPR001715">
    <property type="entry name" value="CH_dom"/>
</dbReference>
<dbReference type="InterPro" id="IPR036872">
    <property type="entry name" value="CH_dom_sf"/>
</dbReference>
<dbReference type="InterPro" id="IPR004953">
    <property type="entry name" value="EB1_C"/>
</dbReference>
<dbReference type="InterPro" id="IPR036133">
    <property type="entry name" value="EB1_C_sf"/>
</dbReference>
<dbReference type="InterPro" id="IPR027328">
    <property type="entry name" value="MAPRE"/>
</dbReference>
<dbReference type="PANTHER" id="PTHR10623">
    <property type="entry name" value="MICROTUBULE-ASSOCIATED PROTEIN RP/EB FAMILY MEMBER"/>
    <property type="match status" value="1"/>
</dbReference>
<dbReference type="Pfam" id="PF00307">
    <property type="entry name" value="CH"/>
    <property type="match status" value="1"/>
</dbReference>
<dbReference type="Pfam" id="PF03271">
    <property type="entry name" value="EB1"/>
    <property type="match status" value="1"/>
</dbReference>
<dbReference type="SUPFAM" id="SSF47576">
    <property type="entry name" value="Calponin-homology domain, CH-domain"/>
    <property type="match status" value="1"/>
</dbReference>
<dbReference type="SUPFAM" id="SSF140612">
    <property type="entry name" value="EB1 dimerisation domain-like"/>
    <property type="match status" value="1"/>
</dbReference>
<dbReference type="PROSITE" id="PS50021">
    <property type="entry name" value="CH"/>
    <property type="match status" value="1"/>
</dbReference>
<dbReference type="PROSITE" id="PS51230">
    <property type="entry name" value="EB1_C"/>
    <property type="match status" value="1"/>
</dbReference>
<reference key="1">
    <citation type="journal article" date="2005" name="Genome Biol.">
        <title>Full-length cDNAs from chicken bursal lymphocytes to facilitate gene function analysis.</title>
        <authorList>
            <person name="Caldwell R.B."/>
            <person name="Kierzek A.M."/>
            <person name="Arakawa H."/>
            <person name="Bezzubov Y."/>
            <person name="Zaim J."/>
            <person name="Fiedler P."/>
            <person name="Kutter S."/>
            <person name="Blagodatski A."/>
            <person name="Kostovska D."/>
            <person name="Koter M."/>
            <person name="Plachy J."/>
            <person name="Carninci P."/>
            <person name="Hayashizaki Y."/>
            <person name="Buerstedde J.-M."/>
        </authorList>
    </citation>
    <scope>NUCLEOTIDE SEQUENCE [LARGE SCALE MRNA]</scope>
    <source>
        <strain>CB</strain>
        <tissue>Bursa of Fabricius</tissue>
    </source>
</reference>
<organism>
    <name type="scientific">Gallus gallus</name>
    <name type="common">Chicken</name>
    <dbReference type="NCBI Taxonomy" id="9031"/>
    <lineage>
        <taxon>Eukaryota</taxon>
        <taxon>Metazoa</taxon>
        <taxon>Chordata</taxon>
        <taxon>Craniata</taxon>
        <taxon>Vertebrata</taxon>
        <taxon>Euteleostomi</taxon>
        <taxon>Archelosauria</taxon>
        <taxon>Archosauria</taxon>
        <taxon>Dinosauria</taxon>
        <taxon>Saurischia</taxon>
        <taxon>Theropoda</taxon>
        <taxon>Coelurosauria</taxon>
        <taxon>Aves</taxon>
        <taxon>Neognathae</taxon>
        <taxon>Galloanserae</taxon>
        <taxon>Galliformes</taxon>
        <taxon>Phasianidae</taxon>
        <taxon>Phasianinae</taxon>
        <taxon>Gallus</taxon>
    </lineage>
</organism>
<comment type="function">
    <text evidence="1">May be involved in microtubule polymerization, and spindle function by stabilizing microtubules and anchoring them at centrosomes.</text>
</comment>
<comment type="subcellular location">
    <subcellularLocation>
        <location evidence="1">Cytoplasm</location>
    </subcellularLocation>
    <subcellularLocation>
        <location evidence="1">Cytoplasm</location>
        <location evidence="1">Cytoskeleton</location>
    </subcellularLocation>
    <text evidence="1">Associated with the microtubule network.</text>
</comment>
<comment type="domain">
    <text evidence="1">The N-terminal domain may form a hydrophobic cleft involved in microtubule binding and the C-terminal may be involved in the formation of mutually exclusive complexes with APC and DCTN1.</text>
</comment>
<comment type="similarity">
    <text evidence="5">Belongs to the MAPRE family.</text>
</comment>